<accession>A5I6X0</accession>
<accession>A7G855</accession>
<name>PYRI_CLOBH</name>
<sequence>MLTINSIKNGIVIDHIQAGHGIKIFKYLGLEEADYRVALIMNAESSKLGKKDIIKIENIMEIDYKVLGFIDPTITIDVIENETIKEKIKLELPKTIENVIKCKNPRCITSIENYIPNEFYLVDEENGEYRCKYCDEIYSGGDINKL</sequence>
<protein>
    <recommendedName>
        <fullName evidence="1">Aspartate carbamoyltransferase regulatory chain</fullName>
    </recommendedName>
</protein>
<reference key="1">
    <citation type="journal article" date="2007" name="Genome Res.">
        <title>Genome sequence of a proteolytic (Group I) Clostridium botulinum strain Hall A and comparative analysis of the clostridial genomes.</title>
        <authorList>
            <person name="Sebaihia M."/>
            <person name="Peck M.W."/>
            <person name="Minton N.P."/>
            <person name="Thomson N.R."/>
            <person name="Holden M.T.G."/>
            <person name="Mitchell W.J."/>
            <person name="Carter A.T."/>
            <person name="Bentley S.D."/>
            <person name="Mason D.R."/>
            <person name="Crossman L."/>
            <person name="Paul C.J."/>
            <person name="Ivens A."/>
            <person name="Wells-Bennik M.H.J."/>
            <person name="Davis I.J."/>
            <person name="Cerdeno-Tarraga A.M."/>
            <person name="Churcher C."/>
            <person name="Quail M.A."/>
            <person name="Chillingworth T."/>
            <person name="Feltwell T."/>
            <person name="Fraser A."/>
            <person name="Goodhead I."/>
            <person name="Hance Z."/>
            <person name="Jagels K."/>
            <person name="Larke N."/>
            <person name="Maddison M."/>
            <person name="Moule S."/>
            <person name="Mungall K."/>
            <person name="Norbertczak H."/>
            <person name="Rabbinowitsch E."/>
            <person name="Sanders M."/>
            <person name="Simmonds M."/>
            <person name="White B."/>
            <person name="Whithead S."/>
            <person name="Parkhill J."/>
        </authorList>
    </citation>
    <scope>NUCLEOTIDE SEQUENCE [LARGE SCALE GENOMIC DNA]</scope>
    <source>
        <strain>Hall / ATCC 3502 / NCTC 13319 / Type A</strain>
    </source>
</reference>
<reference key="2">
    <citation type="journal article" date="2007" name="PLoS ONE">
        <title>Analysis of the neurotoxin complex genes in Clostridium botulinum A1-A4 and B1 strains: BoNT/A3, /Ba4 and /B1 clusters are located within plasmids.</title>
        <authorList>
            <person name="Smith T.J."/>
            <person name="Hill K.K."/>
            <person name="Foley B.T."/>
            <person name="Detter J.C."/>
            <person name="Munk A.C."/>
            <person name="Bruce D.C."/>
            <person name="Doggett N.A."/>
            <person name="Smith L.A."/>
            <person name="Marks J.D."/>
            <person name="Xie G."/>
            <person name="Brettin T.S."/>
        </authorList>
    </citation>
    <scope>NUCLEOTIDE SEQUENCE [LARGE SCALE GENOMIC DNA]</scope>
    <source>
        <strain>Hall / ATCC 3502 / NCTC 13319 / Type A</strain>
    </source>
</reference>
<keyword id="KW-0479">Metal-binding</keyword>
<keyword id="KW-0665">Pyrimidine biosynthesis</keyword>
<keyword id="KW-1185">Reference proteome</keyword>
<keyword id="KW-0862">Zinc</keyword>
<proteinExistence type="inferred from homology"/>
<comment type="function">
    <text evidence="1">Involved in allosteric regulation of aspartate carbamoyltransferase.</text>
</comment>
<comment type="cofactor">
    <cofactor evidence="1">
        <name>Zn(2+)</name>
        <dbReference type="ChEBI" id="CHEBI:29105"/>
    </cofactor>
    <text evidence="1">Binds 1 zinc ion per subunit.</text>
</comment>
<comment type="subunit">
    <text evidence="1">Contains catalytic and regulatory chains.</text>
</comment>
<comment type="similarity">
    <text evidence="1">Belongs to the PyrI family.</text>
</comment>
<gene>
    <name evidence="1" type="primary">pyrI</name>
    <name type="ordered locus">CBO3240</name>
    <name type="ordered locus">CLC_3151</name>
</gene>
<feature type="chain" id="PRO_1000000030" description="Aspartate carbamoyltransferase regulatory chain">
    <location>
        <begin position="1"/>
        <end position="146"/>
    </location>
</feature>
<feature type="binding site" evidence="1">
    <location>
        <position position="102"/>
    </location>
    <ligand>
        <name>Zn(2+)</name>
        <dbReference type="ChEBI" id="CHEBI:29105"/>
    </ligand>
</feature>
<feature type="binding site" evidence="1">
    <location>
        <position position="107"/>
    </location>
    <ligand>
        <name>Zn(2+)</name>
        <dbReference type="ChEBI" id="CHEBI:29105"/>
    </ligand>
</feature>
<feature type="binding site" evidence="1">
    <location>
        <position position="131"/>
    </location>
    <ligand>
        <name>Zn(2+)</name>
        <dbReference type="ChEBI" id="CHEBI:29105"/>
    </ligand>
</feature>
<feature type="binding site" evidence="1">
    <location>
        <position position="134"/>
    </location>
    <ligand>
        <name>Zn(2+)</name>
        <dbReference type="ChEBI" id="CHEBI:29105"/>
    </ligand>
</feature>
<dbReference type="EMBL" id="CP000727">
    <property type="protein sequence ID" value="ABS36601.1"/>
    <property type="molecule type" value="Genomic_DNA"/>
</dbReference>
<dbReference type="EMBL" id="AM412317">
    <property type="protein sequence ID" value="CAL84802.1"/>
    <property type="molecule type" value="Genomic_DNA"/>
</dbReference>
<dbReference type="RefSeq" id="WP_003357668.1">
    <property type="nucleotide sequence ID" value="NC_009698.1"/>
</dbReference>
<dbReference type="RefSeq" id="YP_001255730.1">
    <property type="nucleotide sequence ID" value="NC_009495.1"/>
</dbReference>
<dbReference type="RefSeq" id="YP_001388970.1">
    <property type="nucleotide sequence ID" value="NC_009698.1"/>
</dbReference>
<dbReference type="SMR" id="A5I6X0"/>
<dbReference type="GeneID" id="5187484"/>
<dbReference type="KEGG" id="cbh:CLC_3151"/>
<dbReference type="KEGG" id="cbo:CBO3240"/>
<dbReference type="PATRIC" id="fig|413999.7.peg.3219"/>
<dbReference type="HOGENOM" id="CLU_128576_0_0_9"/>
<dbReference type="PRO" id="PR:A5I6X0"/>
<dbReference type="Proteomes" id="UP000001986">
    <property type="component" value="Chromosome"/>
</dbReference>
<dbReference type="GO" id="GO:0009347">
    <property type="term" value="C:aspartate carbamoyltransferase complex"/>
    <property type="evidence" value="ECO:0000318"/>
    <property type="project" value="GO_Central"/>
</dbReference>
<dbReference type="GO" id="GO:0046872">
    <property type="term" value="F:metal ion binding"/>
    <property type="evidence" value="ECO:0007669"/>
    <property type="project" value="UniProtKB-KW"/>
</dbReference>
<dbReference type="GO" id="GO:0006207">
    <property type="term" value="P:'de novo' pyrimidine nucleobase biosynthetic process"/>
    <property type="evidence" value="ECO:0000318"/>
    <property type="project" value="GO_Central"/>
</dbReference>
<dbReference type="GO" id="GO:0006221">
    <property type="term" value="P:pyrimidine nucleotide biosynthetic process"/>
    <property type="evidence" value="ECO:0007669"/>
    <property type="project" value="UniProtKB-UniRule"/>
</dbReference>
<dbReference type="Gene3D" id="2.30.30.20">
    <property type="entry name" value="Aspartate carbamoyltransferase regulatory subunit, C-terminal domain"/>
    <property type="match status" value="1"/>
</dbReference>
<dbReference type="Gene3D" id="3.30.70.140">
    <property type="entry name" value="Aspartate carbamoyltransferase regulatory subunit, N-terminal domain"/>
    <property type="match status" value="1"/>
</dbReference>
<dbReference type="HAMAP" id="MF_00002">
    <property type="entry name" value="Asp_carb_tr_reg"/>
    <property type="match status" value="1"/>
</dbReference>
<dbReference type="InterPro" id="IPR020545">
    <property type="entry name" value="Asp_carbamoyltransf_reg_N"/>
</dbReference>
<dbReference type="InterPro" id="IPR002801">
    <property type="entry name" value="Asp_carbamoylTrfase_reg"/>
</dbReference>
<dbReference type="InterPro" id="IPR020542">
    <property type="entry name" value="Asp_carbamoyltrfase_reg_C"/>
</dbReference>
<dbReference type="InterPro" id="IPR036792">
    <property type="entry name" value="Asp_carbatrfase_reg_C_sf"/>
</dbReference>
<dbReference type="InterPro" id="IPR036793">
    <property type="entry name" value="Asp_carbatrfase_reg_N_sf"/>
</dbReference>
<dbReference type="NCBIfam" id="NF002063">
    <property type="entry name" value="PRK00893.1-3"/>
    <property type="match status" value="1"/>
</dbReference>
<dbReference type="PANTHER" id="PTHR35805">
    <property type="entry name" value="ASPARTATE CARBAMOYLTRANSFERASE REGULATORY CHAIN"/>
    <property type="match status" value="1"/>
</dbReference>
<dbReference type="PANTHER" id="PTHR35805:SF1">
    <property type="entry name" value="ASPARTATE CARBAMOYLTRANSFERASE REGULATORY CHAIN"/>
    <property type="match status" value="1"/>
</dbReference>
<dbReference type="Pfam" id="PF01948">
    <property type="entry name" value="PyrI"/>
    <property type="match status" value="1"/>
</dbReference>
<dbReference type="Pfam" id="PF02748">
    <property type="entry name" value="PyrI_C"/>
    <property type="match status" value="1"/>
</dbReference>
<dbReference type="SUPFAM" id="SSF57825">
    <property type="entry name" value="Aspartate carbamoyltransferase, Regulatory-chain, C-terminal domain"/>
    <property type="match status" value="1"/>
</dbReference>
<dbReference type="SUPFAM" id="SSF54893">
    <property type="entry name" value="Aspartate carbamoyltransferase, Regulatory-chain, N-terminal domain"/>
    <property type="match status" value="1"/>
</dbReference>
<evidence type="ECO:0000255" key="1">
    <source>
        <dbReference type="HAMAP-Rule" id="MF_00002"/>
    </source>
</evidence>
<organism>
    <name type="scientific">Clostridium botulinum (strain Hall / ATCC 3502 / NCTC 13319 / Type A)</name>
    <dbReference type="NCBI Taxonomy" id="441771"/>
    <lineage>
        <taxon>Bacteria</taxon>
        <taxon>Bacillati</taxon>
        <taxon>Bacillota</taxon>
        <taxon>Clostridia</taxon>
        <taxon>Eubacteriales</taxon>
        <taxon>Clostridiaceae</taxon>
        <taxon>Clostridium</taxon>
    </lineage>
</organism>